<dbReference type="EC" id="6.1.1.11" evidence="1"/>
<dbReference type="EMBL" id="CP000753">
    <property type="protein sequence ID" value="ABS08350.1"/>
    <property type="molecule type" value="Genomic_DNA"/>
</dbReference>
<dbReference type="RefSeq" id="WP_006087497.1">
    <property type="nucleotide sequence ID" value="NC_009665.1"/>
</dbReference>
<dbReference type="SMR" id="A6WNG1"/>
<dbReference type="GeneID" id="11772447"/>
<dbReference type="KEGG" id="sbm:Shew185_2211"/>
<dbReference type="HOGENOM" id="CLU_023797_1_1_6"/>
<dbReference type="UniPathway" id="UPA00906">
    <property type="reaction ID" value="UER00895"/>
</dbReference>
<dbReference type="GO" id="GO:0005737">
    <property type="term" value="C:cytoplasm"/>
    <property type="evidence" value="ECO:0007669"/>
    <property type="project" value="UniProtKB-SubCell"/>
</dbReference>
<dbReference type="GO" id="GO:0005524">
    <property type="term" value="F:ATP binding"/>
    <property type="evidence" value="ECO:0007669"/>
    <property type="project" value="UniProtKB-UniRule"/>
</dbReference>
<dbReference type="GO" id="GO:0004828">
    <property type="term" value="F:serine-tRNA ligase activity"/>
    <property type="evidence" value="ECO:0007669"/>
    <property type="project" value="UniProtKB-UniRule"/>
</dbReference>
<dbReference type="GO" id="GO:0016260">
    <property type="term" value="P:selenocysteine biosynthetic process"/>
    <property type="evidence" value="ECO:0007669"/>
    <property type="project" value="UniProtKB-UniRule"/>
</dbReference>
<dbReference type="GO" id="GO:0006434">
    <property type="term" value="P:seryl-tRNA aminoacylation"/>
    <property type="evidence" value="ECO:0007669"/>
    <property type="project" value="UniProtKB-UniRule"/>
</dbReference>
<dbReference type="CDD" id="cd00770">
    <property type="entry name" value="SerRS_core"/>
    <property type="match status" value="1"/>
</dbReference>
<dbReference type="Gene3D" id="3.30.930.10">
    <property type="entry name" value="Bira Bifunctional Protein, Domain 2"/>
    <property type="match status" value="1"/>
</dbReference>
<dbReference type="Gene3D" id="1.10.287.40">
    <property type="entry name" value="Serine-tRNA synthetase, tRNA binding domain"/>
    <property type="match status" value="1"/>
</dbReference>
<dbReference type="HAMAP" id="MF_00176">
    <property type="entry name" value="Ser_tRNA_synth_type1"/>
    <property type="match status" value="1"/>
</dbReference>
<dbReference type="InterPro" id="IPR002314">
    <property type="entry name" value="aa-tRNA-synt_IIb"/>
</dbReference>
<dbReference type="InterPro" id="IPR006195">
    <property type="entry name" value="aa-tRNA-synth_II"/>
</dbReference>
<dbReference type="InterPro" id="IPR045864">
    <property type="entry name" value="aa-tRNA-synth_II/BPL/LPL"/>
</dbReference>
<dbReference type="InterPro" id="IPR002317">
    <property type="entry name" value="Ser-tRNA-ligase_type_1"/>
</dbReference>
<dbReference type="InterPro" id="IPR015866">
    <property type="entry name" value="Ser-tRNA-synth_1_N"/>
</dbReference>
<dbReference type="InterPro" id="IPR042103">
    <property type="entry name" value="SerRS_1_N_sf"/>
</dbReference>
<dbReference type="InterPro" id="IPR033729">
    <property type="entry name" value="SerRS_core"/>
</dbReference>
<dbReference type="InterPro" id="IPR010978">
    <property type="entry name" value="tRNA-bd_arm"/>
</dbReference>
<dbReference type="NCBIfam" id="TIGR00414">
    <property type="entry name" value="serS"/>
    <property type="match status" value="1"/>
</dbReference>
<dbReference type="PANTHER" id="PTHR43697:SF1">
    <property type="entry name" value="SERINE--TRNA LIGASE"/>
    <property type="match status" value="1"/>
</dbReference>
<dbReference type="PANTHER" id="PTHR43697">
    <property type="entry name" value="SERYL-TRNA SYNTHETASE"/>
    <property type="match status" value="1"/>
</dbReference>
<dbReference type="Pfam" id="PF02403">
    <property type="entry name" value="Seryl_tRNA_N"/>
    <property type="match status" value="1"/>
</dbReference>
<dbReference type="Pfam" id="PF00587">
    <property type="entry name" value="tRNA-synt_2b"/>
    <property type="match status" value="1"/>
</dbReference>
<dbReference type="PIRSF" id="PIRSF001529">
    <property type="entry name" value="Ser-tRNA-synth_IIa"/>
    <property type="match status" value="1"/>
</dbReference>
<dbReference type="PRINTS" id="PR00981">
    <property type="entry name" value="TRNASYNTHSER"/>
</dbReference>
<dbReference type="SUPFAM" id="SSF55681">
    <property type="entry name" value="Class II aaRS and biotin synthetases"/>
    <property type="match status" value="1"/>
</dbReference>
<dbReference type="SUPFAM" id="SSF46589">
    <property type="entry name" value="tRNA-binding arm"/>
    <property type="match status" value="1"/>
</dbReference>
<dbReference type="PROSITE" id="PS50862">
    <property type="entry name" value="AA_TRNA_LIGASE_II"/>
    <property type="match status" value="1"/>
</dbReference>
<evidence type="ECO:0000255" key="1">
    <source>
        <dbReference type="HAMAP-Rule" id="MF_00176"/>
    </source>
</evidence>
<feature type="chain" id="PRO_1000019810" description="Serine--tRNA ligase">
    <location>
        <begin position="1"/>
        <end position="428"/>
    </location>
</feature>
<feature type="binding site" evidence="1">
    <location>
        <begin position="235"/>
        <end position="237"/>
    </location>
    <ligand>
        <name>L-serine</name>
        <dbReference type="ChEBI" id="CHEBI:33384"/>
    </ligand>
</feature>
<feature type="binding site" evidence="1">
    <location>
        <begin position="266"/>
        <end position="268"/>
    </location>
    <ligand>
        <name>ATP</name>
        <dbReference type="ChEBI" id="CHEBI:30616"/>
    </ligand>
</feature>
<feature type="binding site" evidence="1">
    <location>
        <position position="289"/>
    </location>
    <ligand>
        <name>L-serine</name>
        <dbReference type="ChEBI" id="CHEBI:33384"/>
    </ligand>
</feature>
<feature type="binding site" evidence="1">
    <location>
        <begin position="353"/>
        <end position="356"/>
    </location>
    <ligand>
        <name>ATP</name>
        <dbReference type="ChEBI" id="CHEBI:30616"/>
    </ligand>
</feature>
<feature type="binding site" evidence="1">
    <location>
        <position position="389"/>
    </location>
    <ligand>
        <name>L-serine</name>
        <dbReference type="ChEBI" id="CHEBI:33384"/>
    </ligand>
</feature>
<proteinExistence type="inferred from homology"/>
<accession>A6WNG1</accession>
<reference key="1">
    <citation type="submission" date="2007-07" db="EMBL/GenBank/DDBJ databases">
        <title>Complete sequence of chromosome of Shewanella baltica OS185.</title>
        <authorList>
            <consortium name="US DOE Joint Genome Institute"/>
            <person name="Copeland A."/>
            <person name="Lucas S."/>
            <person name="Lapidus A."/>
            <person name="Barry K."/>
            <person name="Glavina del Rio T."/>
            <person name="Dalin E."/>
            <person name="Tice H."/>
            <person name="Pitluck S."/>
            <person name="Sims D."/>
            <person name="Brettin T."/>
            <person name="Bruce D."/>
            <person name="Detter J.C."/>
            <person name="Han C."/>
            <person name="Schmutz J."/>
            <person name="Larimer F."/>
            <person name="Land M."/>
            <person name="Hauser L."/>
            <person name="Kyrpides N."/>
            <person name="Mikhailova N."/>
            <person name="Brettar I."/>
            <person name="Rodrigues J."/>
            <person name="Konstantinidis K."/>
            <person name="Tiedje J."/>
            <person name="Richardson P."/>
        </authorList>
    </citation>
    <scope>NUCLEOTIDE SEQUENCE [LARGE SCALE GENOMIC DNA]</scope>
    <source>
        <strain>OS185</strain>
    </source>
</reference>
<sequence length="428" mass="47087">MLDPKFLRNELEVTAERLATRGFILDIAHLTQLEEKRKSLQVATEELQASRNAISKSIGQAKARGEDVEAIMAQVGDLGSQLDAKKIELAAVLEEVNAIAMSMPNLPDESAPIGADETENVEVRRWGTPRTFDFPIKDHIDLGEGLNGLDFKNAVKITGSRFIVMKGQVARLNRAIGQFMLDLHTTEHGYTEAYVPLLVNEASLLGTGQLPKFGEDLFHTKPATEEGQGLSLIPTAEVPLTNLVRDSIVDEDELPIKLTAHTACFRSEAGSYGKDTRGLIRQHQFDKVEMVQIVKPEDSMAALEALTGHAETVLQRLGLPYRTVILCTGDMGFGSSKTYDIEVWLPAQNTYREISSCSNMKDFQARRMQARYRVKADNKPALLHTLNGSGLAVGRTLVAILENYQNADGSITIPEVLRPYMGGLTQIG</sequence>
<protein>
    <recommendedName>
        <fullName evidence="1">Serine--tRNA ligase</fullName>
        <ecNumber evidence="1">6.1.1.11</ecNumber>
    </recommendedName>
    <alternativeName>
        <fullName evidence="1">Seryl-tRNA synthetase</fullName>
        <shortName evidence="1">SerRS</shortName>
    </alternativeName>
    <alternativeName>
        <fullName evidence="1">Seryl-tRNA(Ser/Sec) synthetase</fullName>
    </alternativeName>
</protein>
<keyword id="KW-0030">Aminoacyl-tRNA synthetase</keyword>
<keyword id="KW-0067">ATP-binding</keyword>
<keyword id="KW-0963">Cytoplasm</keyword>
<keyword id="KW-0436">Ligase</keyword>
<keyword id="KW-0547">Nucleotide-binding</keyword>
<keyword id="KW-0648">Protein biosynthesis</keyword>
<gene>
    <name evidence="1" type="primary">serS</name>
    <name type="ordered locus">Shew185_2211</name>
</gene>
<comment type="function">
    <text evidence="1">Catalyzes the attachment of serine to tRNA(Ser). Is also able to aminoacylate tRNA(Sec) with serine, to form the misacylated tRNA L-seryl-tRNA(Sec), which will be further converted into selenocysteinyl-tRNA(Sec).</text>
</comment>
<comment type="catalytic activity">
    <reaction evidence="1">
        <text>tRNA(Ser) + L-serine + ATP = L-seryl-tRNA(Ser) + AMP + diphosphate + H(+)</text>
        <dbReference type="Rhea" id="RHEA:12292"/>
        <dbReference type="Rhea" id="RHEA-COMP:9669"/>
        <dbReference type="Rhea" id="RHEA-COMP:9703"/>
        <dbReference type="ChEBI" id="CHEBI:15378"/>
        <dbReference type="ChEBI" id="CHEBI:30616"/>
        <dbReference type="ChEBI" id="CHEBI:33019"/>
        <dbReference type="ChEBI" id="CHEBI:33384"/>
        <dbReference type="ChEBI" id="CHEBI:78442"/>
        <dbReference type="ChEBI" id="CHEBI:78533"/>
        <dbReference type="ChEBI" id="CHEBI:456215"/>
        <dbReference type="EC" id="6.1.1.11"/>
    </reaction>
</comment>
<comment type="catalytic activity">
    <reaction evidence="1">
        <text>tRNA(Sec) + L-serine + ATP = L-seryl-tRNA(Sec) + AMP + diphosphate + H(+)</text>
        <dbReference type="Rhea" id="RHEA:42580"/>
        <dbReference type="Rhea" id="RHEA-COMP:9742"/>
        <dbReference type="Rhea" id="RHEA-COMP:10128"/>
        <dbReference type="ChEBI" id="CHEBI:15378"/>
        <dbReference type="ChEBI" id="CHEBI:30616"/>
        <dbReference type="ChEBI" id="CHEBI:33019"/>
        <dbReference type="ChEBI" id="CHEBI:33384"/>
        <dbReference type="ChEBI" id="CHEBI:78442"/>
        <dbReference type="ChEBI" id="CHEBI:78533"/>
        <dbReference type="ChEBI" id="CHEBI:456215"/>
        <dbReference type="EC" id="6.1.1.11"/>
    </reaction>
</comment>
<comment type="pathway">
    <text evidence="1">Aminoacyl-tRNA biosynthesis; selenocysteinyl-tRNA(Sec) biosynthesis; L-seryl-tRNA(Sec) from L-serine and tRNA(Sec): step 1/1.</text>
</comment>
<comment type="subunit">
    <text evidence="1">Homodimer. The tRNA molecule binds across the dimer.</text>
</comment>
<comment type="subcellular location">
    <subcellularLocation>
        <location evidence="1">Cytoplasm</location>
    </subcellularLocation>
</comment>
<comment type="domain">
    <text evidence="1">Consists of two distinct domains, a catalytic core and a N-terminal extension that is involved in tRNA binding.</text>
</comment>
<comment type="similarity">
    <text evidence="1">Belongs to the class-II aminoacyl-tRNA synthetase family. Type-1 seryl-tRNA synthetase subfamily.</text>
</comment>
<organism>
    <name type="scientific">Shewanella baltica (strain OS185)</name>
    <dbReference type="NCBI Taxonomy" id="402882"/>
    <lineage>
        <taxon>Bacteria</taxon>
        <taxon>Pseudomonadati</taxon>
        <taxon>Pseudomonadota</taxon>
        <taxon>Gammaproteobacteria</taxon>
        <taxon>Alteromonadales</taxon>
        <taxon>Shewanellaceae</taxon>
        <taxon>Shewanella</taxon>
    </lineage>
</organism>
<name>SYS_SHEB8</name>